<evidence type="ECO:0000255" key="1">
    <source>
        <dbReference type="HAMAP-Rule" id="MF_00005"/>
    </source>
</evidence>
<feature type="chain" id="PRO_0000321312" description="Argininosuccinate synthase">
    <location>
        <begin position="1"/>
        <end position="408"/>
    </location>
</feature>
<feature type="binding site" evidence="1">
    <location>
        <begin position="8"/>
        <end position="16"/>
    </location>
    <ligand>
        <name>ATP</name>
        <dbReference type="ChEBI" id="CHEBI:30616"/>
    </ligand>
</feature>
<feature type="binding site" evidence="1">
    <location>
        <position position="86"/>
    </location>
    <ligand>
        <name>L-citrulline</name>
        <dbReference type="ChEBI" id="CHEBI:57743"/>
    </ligand>
</feature>
<feature type="binding site" evidence="1">
    <location>
        <position position="116"/>
    </location>
    <ligand>
        <name>ATP</name>
        <dbReference type="ChEBI" id="CHEBI:30616"/>
    </ligand>
</feature>
<feature type="binding site" evidence="1">
    <location>
        <position position="118"/>
    </location>
    <ligand>
        <name>L-aspartate</name>
        <dbReference type="ChEBI" id="CHEBI:29991"/>
    </ligand>
</feature>
<feature type="binding site" evidence="1">
    <location>
        <position position="122"/>
    </location>
    <ligand>
        <name>L-aspartate</name>
        <dbReference type="ChEBI" id="CHEBI:29991"/>
    </ligand>
</feature>
<feature type="binding site" evidence="1">
    <location>
        <position position="122"/>
    </location>
    <ligand>
        <name>L-citrulline</name>
        <dbReference type="ChEBI" id="CHEBI:57743"/>
    </ligand>
</feature>
<feature type="binding site" evidence="1">
    <location>
        <position position="123"/>
    </location>
    <ligand>
        <name>L-aspartate</name>
        <dbReference type="ChEBI" id="CHEBI:29991"/>
    </ligand>
</feature>
<feature type="binding site" evidence="1">
    <location>
        <position position="126"/>
    </location>
    <ligand>
        <name>L-citrulline</name>
        <dbReference type="ChEBI" id="CHEBI:57743"/>
    </ligand>
</feature>
<feature type="binding site" evidence="1">
    <location>
        <position position="174"/>
    </location>
    <ligand>
        <name>L-citrulline</name>
        <dbReference type="ChEBI" id="CHEBI:57743"/>
    </ligand>
</feature>
<feature type="binding site" evidence="1">
    <location>
        <position position="259"/>
    </location>
    <ligand>
        <name>L-citrulline</name>
        <dbReference type="ChEBI" id="CHEBI:57743"/>
    </ligand>
</feature>
<feature type="binding site" evidence="1">
    <location>
        <position position="271"/>
    </location>
    <ligand>
        <name>L-citrulline</name>
        <dbReference type="ChEBI" id="CHEBI:57743"/>
    </ligand>
</feature>
<name>ASSY_LEUMM</name>
<reference key="1">
    <citation type="journal article" date="2006" name="Proc. Natl. Acad. Sci. U.S.A.">
        <title>Comparative genomics of the lactic acid bacteria.</title>
        <authorList>
            <person name="Makarova K.S."/>
            <person name="Slesarev A."/>
            <person name="Wolf Y.I."/>
            <person name="Sorokin A."/>
            <person name="Mirkin B."/>
            <person name="Koonin E.V."/>
            <person name="Pavlov A."/>
            <person name="Pavlova N."/>
            <person name="Karamychev V."/>
            <person name="Polouchine N."/>
            <person name="Shakhova V."/>
            <person name="Grigoriev I."/>
            <person name="Lou Y."/>
            <person name="Rohksar D."/>
            <person name="Lucas S."/>
            <person name="Huang K."/>
            <person name="Goodstein D.M."/>
            <person name="Hawkins T."/>
            <person name="Plengvidhya V."/>
            <person name="Welker D."/>
            <person name="Hughes J."/>
            <person name="Goh Y."/>
            <person name="Benson A."/>
            <person name="Baldwin K."/>
            <person name="Lee J.-H."/>
            <person name="Diaz-Muniz I."/>
            <person name="Dosti B."/>
            <person name="Smeianov V."/>
            <person name="Wechter W."/>
            <person name="Barabote R."/>
            <person name="Lorca G."/>
            <person name="Altermann E."/>
            <person name="Barrangou R."/>
            <person name="Ganesan B."/>
            <person name="Xie Y."/>
            <person name="Rawsthorne H."/>
            <person name="Tamir D."/>
            <person name="Parker C."/>
            <person name="Breidt F."/>
            <person name="Broadbent J.R."/>
            <person name="Hutkins R."/>
            <person name="O'Sullivan D."/>
            <person name="Steele J."/>
            <person name="Unlu G."/>
            <person name="Saier M.H. Jr."/>
            <person name="Klaenhammer T."/>
            <person name="Richardson P."/>
            <person name="Kozyavkin S."/>
            <person name="Weimer B.C."/>
            <person name="Mills D.A."/>
        </authorList>
    </citation>
    <scope>NUCLEOTIDE SEQUENCE [LARGE SCALE GENOMIC DNA]</scope>
    <source>
        <strain>ATCC 8293 / DSM 20343 / BCRC 11652 / CCM 1803 / JCM 6124 / NCDO 523 / NBRC 100496 / NCIMB 8023 / NCTC 12954 / NRRL B-1118 / 37Y</strain>
    </source>
</reference>
<sequence length="408" mass="44912">MTDTLVLAYSGGLDTSVAIPWLKDKGYDVIAVVLDVGQHGKNLNEIQAKALKVGAKQSIVIDAKAEFADKYVAPVIKANMMYEGEYPMVSALSRPLIIKKLVDIAHENDAVAIAHGSTGHGNDQVRFEAAIHALDPDMKIEAPIRDFQWSREEEIQYAQEHDVPVPIDLDSPYSIDENLWGRANEAGILENPWNQAPEDAFALTTAIEDAPDTPEFIDVTFEAGVPVALNGEVLSLEKLIVAVNEIAGKHGIGRIDHIENRLVGIKSREIYEAPAAAVLMTAHKDLEDLTLERDVAHFKPIVEQQLANLVYEAKWVSPLFDSLMAFIDSTQQNVNGVVKMKLFKGNATAVARQSEHNSLYDEDLATYTSSSSFDQASAVGFIKLWTLSNTVYEQVNHVHSQAKKNTVK</sequence>
<accession>Q03W70</accession>
<dbReference type="EC" id="6.3.4.5" evidence="1"/>
<dbReference type="EMBL" id="CP000414">
    <property type="protein sequence ID" value="ABJ62552.1"/>
    <property type="molecule type" value="Genomic_DNA"/>
</dbReference>
<dbReference type="RefSeq" id="WP_011680142.1">
    <property type="nucleotide sequence ID" value="NC_008531.1"/>
</dbReference>
<dbReference type="SMR" id="Q03W70"/>
<dbReference type="EnsemblBacteria" id="ABJ62552">
    <property type="protein sequence ID" value="ABJ62552"/>
    <property type="gene ID" value="LEUM_1459"/>
</dbReference>
<dbReference type="GeneID" id="29576602"/>
<dbReference type="KEGG" id="lme:LEUM_1459"/>
<dbReference type="eggNOG" id="COG0137">
    <property type="taxonomic scope" value="Bacteria"/>
</dbReference>
<dbReference type="HOGENOM" id="CLU_032784_4_2_9"/>
<dbReference type="UniPathway" id="UPA00068">
    <property type="reaction ID" value="UER00113"/>
</dbReference>
<dbReference type="Proteomes" id="UP000000362">
    <property type="component" value="Chromosome"/>
</dbReference>
<dbReference type="GO" id="GO:0005737">
    <property type="term" value="C:cytoplasm"/>
    <property type="evidence" value="ECO:0007669"/>
    <property type="project" value="UniProtKB-SubCell"/>
</dbReference>
<dbReference type="GO" id="GO:0004055">
    <property type="term" value="F:argininosuccinate synthase activity"/>
    <property type="evidence" value="ECO:0007669"/>
    <property type="project" value="UniProtKB-UniRule"/>
</dbReference>
<dbReference type="GO" id="GO:0005524">
    <property type="term" value="F:ATP binding"/>
    <property type="evidence" value="ECO:0007669"/>
    <property type="project" value="UniProtKB-UniRule"/>
</dbReference>
<dbReference type="GO" id="GO:0000053">
    <property type="term" value="P:argininosuccinate metabolic process"/>
    <property type="evidence" value="ECO:0007669"/>
    <property type="project" value="TreeGrafter"/>
</dbReference>
<dbReference type="GO" id="GO:0006526">
    <property type="term" value="P:L-arginine biosynthetic process"/>
    <property type="evidence" value="ECO:0007669"/>
    <property type="project" value="UniProtKB-UniRule"/>
</dbReference>
<dbReference type="GO" id="GO:0000050">
    <property type="term" value="P:urea cycle"/>
    <property type="evidence" value="ECO:0007669"/>
    <property type="project" value="TreeGrafter"/>
</dbReference>
<dbReference type="CDD" id="cd01999">
    <property type="entry name" value="ASS"/>
    <property type="match status" value="1"/>
</dbReference>
<dbReference type="FunFam" id="3.40.50.620:FF:000038">
    <property type="entry name" value="Argininosuccinate synthase"/>
    <property type="match status" value="1"/>
</dbReference>
<dbReference type="FunFam" id="3.90.1260.10:FF:000007">
    <property type="entry name" value="Argininosuccinate synthase"/>
    <property type="match status" value="1"/>
</dbReference>
<dbReference type="Gene3D" id="3.90.1260.10">
    <property type="entry name" value="Argininosuccinate synthetase, chain A, domain 2"/>
    <property type="match status" value="1"/>
</dbReference>
<dbReference type="Gene3D" id="3.40.50.620">
    <property type="entry name" value="HUPs"/>
    <property type="match status" value="1"/>
</dbReference>
<dbReference type="Gene3D" id="1.20.5.470">
    <property type="entry name" value="Single helix bin"/>
    <property type="match status" value="1"/>
</dbReference>
<dbReference type="HAMAP" id="MF_00005">
    <property type="entry name" value="Arg_succ_synth_type1"/>
    <property type="match status" value="1"/>
</dbReference>
<dbReference type="InterPro" id="IPR048268">
    <property type="entry name" value="Arginosuc_syn_C"/>
</dbReference>
<dbReference type="InterPro" id="IPR048267">
    <property type="entry name" value="Arginosuc_syn_N"/>
</dbReference>
<dbReference type="InterPro" id="IPR001518">
    <property type="entry name" value="Arginosuc_synth"/>
</dbReference>
<dbReference type="InterPro" id="IPR018223">
    <property type="entry name" value="Arginosuc_synth_CS"/>
</dbReference>
<dbReference type="InterPro" id="IPR023434">
    <property type="entry name" value="Arginosuc_synth_type_1_subfam"/>
</dbReference>
<dbReference type="InterPro" id="IPR024074">
    <property type="entry name" value="AS_cat/multimer_dom_body"/>
</dbReference>
<dbReference type="InterPro" id="IPR014729">
    <property type="entry name" value="Rossmann-like_a/b/a_fold"/>
</dbReference>
<dbReference type="NCBIfam" id="TIGR00032">
    <property type="entry name" value="argG"/>
    <property type="match status" value="1"/>
</dbReference>
<dbReference type="NCBIfam" id="NF001770">
    <property type="entry name" value="PRK00509.1"/>
    <property type="match status" value="1"/>
</dbReference>
<dbReference type="PANTHER" id="PTHR11587">
    <property type="entry name" value="ARGININOSUCCINATE SYNTHASE"/>
    <property type="match status" value="1"/>
</dbReference>
<dbReference type="PANTHER" id="PTHR11587:SF2">
    <property type="entry name" value="ARGININOSUCCINATE SYNTHASE"/>
    <property type="match status" value="1"/>
</dbReference>
<dbReference type="Pfam" id="PF20979">
    <property type="entry name" value="Arginosuc_syn_C"/>
    <property type="match status" value="1"/>
</dbReference>
<dbReference type="Pfam" id="PF00764">
    <property type="entry name" value="Arginosuc_synth"/>
    <property type="match status" value="1"/>
</dbReference>
<dbReference type="SUPFAM" id="SSF52402">
    <property type="entry name" value="Adenine nucleotide alpha hydrolases-like"/>
    <property type="match status" value="1"/>
</dbReference>
<dbReference type="SUPFAM" id="SSF69864">
    <property type="entry name" value="Argininosuccinate synthetase, C-terminal domain"/>
    <property type="match status" value="1"/>
</dbReference>
<dbReference type="PROSITE" id="PS00564">
    <property type="entry name" value="ARGININOSUCCIN_SYN_1"/>
    <property type="match status" value="1"/>
</dbReference>
<keyword id="KW-0028">Amino-acid biosynthesis</keyword>
<keyword id="KW-0055">Arginine biosynthesis</keyword>
<keyword id="KW-0067">ATP-binding</keyword>
<keyword id="KW-0963">Cytoplasm</keyword>
<keyword id="KW-0436">Ligase</keyword>
<keyword id="KW-0547">Nucleotide-binding</keyword>
<keyword id="KW-1185">Reference proteome</keyword>
<comment type="catalytic activity">
    <reaction evidence="1">
        <text>L-citrulline + L-aspartate + ATP = 2-(N(omega)-L-arginino)succinate + AMP + diphosphate + H(+)</text>
        <dbReference type="Rhea" id="RHEA:10932"/>
        <dbReference type="ChEBI" id="CHEBI:15378"/>
        <dbReference type="ChEBI" id="CHEBI:29991"/>
        <dbReference type="ChEBI" id="CHEBI:30616"/>
        <dbReference type="ChEBI" id="CHEBI:33019"/>
        <dbReference type="ChEBI" id="CHEBI:57472"/>
        <dbReference type="ChEBI" id="CHEBI:57743"/>
        <dbReference type="ChEBI" id="CHEBI:456215"/>
        <dbReference type="EC" id="6.3.4.5"/>
    </reaction>
</comment>
<comment type="pathway">
    <text evidence="1">Amino-acid biosynthesis; L-arginine biosynthesis; L-arginine from L-ornithine and carbamoyl phosphate: step 2/3.</text>
</comment>
<comment type="subunit">
    <text evidence="1">Homotetramer.</text>
</comment>
<comment type="subcellular location">
    <subcellularLocation>
        <location evidence="1">Cytoplasm</location>
    </subcellularLocation>
</comment>
<comment type="similarity">
    <text evidence="1">Belongs to the argininosuccinate synthase family. Type 1 subfamily.</text>
</comment>
<proteinExistence type="inferred from homology"/>
<organism>
    <name type="scientific">Leuconostoc mesenteroides subsp. mesenteroides (strain ATCC 8293 / DSM 20343 / BCRC 11652 / CCM 1803 / JCM 6124 / NCDO 523 / NBRC 100496 / NCIMB 8023 / NCTC 12954 / NRRL B-1118 / 37Y)</name>
    <dbReference type="NCBI Taxonomy" id="203120"/>
    <lineage>
        <taxon>Bacteria</taxon>
        <taxon>Bacillati</taxon>
        <taxon>Bacillota</taxon>
        <taxon>Bacilli</taxon>
        <taxon>Lactobacillales</taxon>
        <taxon>Lactobacillaceae</taxon>
        <taxon>Leuconostoc</taxon>
    </lineage>
</organism>
<gene>
    <name evidence="1" type="primary">argG</name>
    <name type="ordered locus">LEUM_1459</name>
</gene>
<protein>
    <recommendedName>
        <fullName evidence="1">Argininosuccinate synthase</fullName>
        <ecNumber evidence="1">6.3.4.5</ecNumber>
    </recommendedName>
    <alternativeName>
        <fullName evidence="1">Citrulline--aspartate ligase</fullName>
    </alternativeName>
</protein>